<reference key="1">
    <citation type="journal article" date="1991" name="Mol. Gen. Genet.">
        <title>Mitochondrial inner membrane protease 1 of Saccharomyces cerevisiae shows sequence similarity to the Escherichia coli leader peptidase.</title>
        <authorList>
            <person name="Behrens M."/>
            <person name="Michaelis G."/>
            <person name="Pratje E."/>
        </authorList>
    </citation>
    <scope>NUCLEOTIDE SEQUENCE [GENOMIC DNA]</scope>
    <scope>MUTAGENESIS OF GLY-88</scope>
</reference>
<reference key="2">
    <citation type="journal article" date="1997" name="Nature">
        <title>The nucleotide sequence of Saccharomyces cerevisiae chromosome XIII.</title>
        <authorList>
            <person name="Bowman S."/>
            <person name="Churcher C.M."/>
            <person name="Badcock K."/>
            <person name="Brown D."/>
            <person name="Chillingworth T."/>
            <person name="Connor R."/>
            <person name="Dedman K."/>
            <person name="Devlin K."/>
            <person name="Gentles S."/>
            <person name="Hamlin N."/>
            <person name="Hunt S."/>
            <person name="Jagels K."/>
            <person name="Lye G."/>
            <person name="Moule S."/>
            <person name="Odell C."/>
            <person name="Pearson D."/>
            <person name="Rajandream M.A."/>
            <person name="Rice P."/>
            <person name="Skelton J."/>
            <person name="Walsh S.V."/>
            <person name="Whitehead S."/>
            <person name="Barrell B.G."/>
        </authorList>
    </citation>
    <scope>NUCLEOTIDE SEQUENCE [LARGE SCALE GENOMIC DNA]</scope>
    <source>
        <strain>ATCC 204508 / S288c</strain>
    </source>
</reference>
<reference key="3">
    <citation type="journal article" date="2014" name="G3 (Bethesda)">
        <title>The reference genome sequence of Saccharomyces cerevisiae: Then and now.</title>
        <authorList>
            <person name="Engel S.R."/>
            <person name="Dietrich F.S."/>
            <person name="Fisk D.G."/>
            <person name="Binkley G."/>
            <person name="Balakrishnan R."/>
            <person name="Costanzo M.C."/>
            <person name="Dwight S.S."/>
            <person name="Hitz B.C."/>
            <person name="Karra K."/>
            <person name="Nash R.S."/>
            <person name="Weng S."/>
            <person name="Wong E.D."/>
            <person name="Lloyd P."/>
            <person name="Skrzypek M.S."/>
            <person name="Miyasato S.R."/>
            <person name="Simison M."/>
            <person name="Cherry J.M."/>
        </authorList>
    </citation>
    <scope>GENOME REANNOTATION</scope>
    <source>
        <strain>ATCC 204508 / S288c</strain>
    </source>
</reference>
<reference key="4">
    <citation type="journal article" date="2007" name="Genome Res.">
        <title>Approaching a complete repository of sequence-verified protein-encoding clones for Saccharomyces cerevisiae.</title>
        <authorList>
            <person name="Hu Y."/>
            <person name="Rolfs A."/>
            <person name="Bhullar B."/>
            <person name="Murthy T.V.S."/>
            <person name="Zhu C."/>
            <person name="Berger M.F."/>
            <person name="Camargo A.A."/>
            <person name="Kelley F."/>
            <person name="McCarron S."/>
            <person name="Jepson D."/>
            <person name="Richardson A."/>
            <person name="Raphael J."/>
            <person name="Moreira D."/>
            <person name="Taycher E."/>
            <person name="Zuo D."/>
            <person name="Mohr S."/>
            <person name="Kane M.F."/>
            <person name="Williamson J."/>
            <person name="Simpson A.J.G."/>
            <person name="Bulyk M.L."/>
            <person name="Harlow E."/>
            <person name="Marsischky G."/>
            <person name="Kolodner R.D."/>
            <person name="LaBaer J."/>
        </authorList>
    </citation>
    <scope>NUCLEOTIDE SEQUENCE [GENOMIC DNA]</scope>
    <source>
        <strain>ATCC 204508 / S288c</strain>
    </source>
</reference>
<reference key="5">
    <citation type="journal article" date="1994" name="J. Biol. Chem.">
        <title>Purified inner membrane protease I of yeast mitochondria is a heterodimer.</title>
        <authorList>
            <person name="Schneider A."/>
            <person name="Oppliger W."/>
            <person name="Jenoe P."/>
        </authorList>
    </citation>
    <scope>PROTEIN SEQUENCE OF 2-16</scope>
    <scope>SUBUNIT</scope>
</reference>
<reference key="6">
    <citation type="journal article" date="1999" name="J. Biol. Chem.">
        <title>Signal peptides having standard and nonstandard cleavage sites can be processed by Imp1p of the mitochondrial inner membrane protease.</title>
        <authorList>
            <person name="Chen X."/>
            <person name="Van Valkenburgh C."/>
            <person name="Fang H."/>
            <person name="Green N."/>
        </authorList>
    </citation>
    <scope>MUTAGENESIS OF SER-40; LYS-84; ARG-85; ASP-131 AND ASP-138</scope>
</reference>
<reference key="7">
    <citation type="journal article" date="2004" name="Mol. Genet. Genomics">
        <title>The mitochondrial IMP peptidase of yeast: functional analysis of domains and identification of Gut2 as a new natural substrate.</title>
        <authorList>
            <person name="Esser K."/>
            <person name="Jan P.S."/>
            <person name="Pratje E."/>
            <person name="Michaelis G."/>
        </authorList>
    </citation>
    <scope>FUNCTION</scope>
    <scope>MUTAGENESIS OF GLY-88 AND GLY-130</scope>
</reference>
<feature type="initiator methionine" description="Removed" evidence="5">
    <location>
        <position position="1"/>
    </location>
</feature>
<feature type="chain" id="PRO_0000109537" description="Mitochondrial inner membrane protease subunit 1">
    <location>
        <begin position="2"/>
        <end position="190"/>
    </location>
</feature>
<feature type="active site" evidence="1">
    <location>
        <position position="40"/>
    </location>
</feature>
<feature type="active site" evidence="1">
    <location>
        <position position="84"/>
    </location>
</feature>
<feature type="mutagenesis site" description="Abolishes enzymatic activity." evidence="2">
    <original>S</original>
    <variation>A</variation>
    <variation>T</variation>
    <location>
        <position position="40"/>
    </location>
</feature>
<feature type="mutagenesis site" description="Abolishes enzymatic activity." evidence="2">
    <original>K</original>
    <variation>H</variation>
    <variation>R</variation>
    <location>
        <position position="84"/>
    </location>
</feature>
<feature type="mutagenesis site" description="Reduces enzymatic activity." evidence="2">
    <original>R</original>
    <variation>A</variation>
    <location>
        <position position="85"/>
    </location>
</feature>
<feature type="mutagenesis site" description="In pet ts2858; temperature-sensitive; abolishes processing of CYB2 and presence of SOM1 in the IMP complex." evidence="3 4">
    <original>G</original>
    <variation>D</variation>
    <location>
        <position position="88"/>
    </location>
</feature>
<feature type="mutagenesis site" description="Abolishes processing of CYB2 and COX2 and presence of SOM1 in the IMP complex." evidence="3">
    <original>G</original>
    <variation>S</variation>
    <location>
        <position position="130"/>
    </location>
</feature>
<feature type="mutagenesis site" description="Reduces enzymatic activity." evidence="2">
    <original>D</original>
    <variation>E</variation>
    <variation>N</variation>
    <location>
        <position position="131"/>
    </location>
</feature>
<feature type="mutagenesis site" description="Abolishes enzymatic activity." evidence="2">
    <original>D</original>
    <variation>Y</variation>
    <location>
        <position position="131"/>
    </location>
</feature>
<feature type="mutagenesis site" description="Abolishes enzymatic activity." evidence="2">
    <original>D</original>
    <variation>N</variation>
    <variation>E</variation>
    <location>
        <position position="138"/>
    </location>
</feature>
<feature type="sequence conflict" description="In Ref. 4; AAS56741." evidence="6" ref="4">
    <original>I</original>
    <variation>V</variation>
    <location>
        <position position="178"/>
    </location>
</feature>
<name>IMP1_YEAST</name>
<proteinExistence type="evidence at protein level"/>
<gene>
    <name type="primary">IMP1</name>
    <name type="synonym">PET2858</name>
    <name type="ordered locus">YMR150C</name>
    <name type="ORF">YM9375.20C</name>
</gene>
<organism>
    <name type="scientific">Saccharomyces cerevisiae (strain ATCC 204508 / S288c)</name>
    <name type="common">Baker's yeast</name>
    <dbReference type="NCBI Taxonomy" id="559292"/>
    <lineage>
        <taxon>Eukaryota</taxon>
        <taxon>Fungi</taxon>
        <taxon>Dikarya</taxon>
        <taxon>Ascomycota</taxon>
        <taxon>Saccharomycotina</taxon>
        <taxon>Saccharomycetes</taxon>
        <taxon>Saccharomycetales</taxon>
        <taxon>Saccharomycetaceae</taxon>
        <taxon>Saccharomyces</taxon>
    </lineage>
</organism>
<dbReference type="EC" id="3.4.21.-"/>
<dbReference type="EMBL" id="S55518">
    <property type="protein sequence ID" value="AAB19704.1"/>
    <property type="molecule type" value="Genomic_DNA"/>
</dbReference>
<dbReference type="EMBL" id="Z47071">
    <property type="protein sequence ID" value="CAA87365.1"/>
    <property type="molecule type" value="Genomic_DNA"/>
</dbReference>
<dbReference type="EMBL" id="AY558415">
    <property type="protein sequence ID" value="AAS56741.1"/>
    <property type="molecule type" value="Genomic_DNA"/>
</dbReference>
<dbReference type="EMBL" id="BK006946">
    <property type="protein sequence ID" value="DAA10046.1"/>
    <property type="molecule type" value="Genomic_DNA"/>
</dbReference>
<dbReference type="PIR" id="S16817">
    <property type="entry name" value="S16817"/>
</dbReference>
<dbReference type="RefSeq" id="NP_013870.1">
    <property type="nucleotide sequence ID" value="NM_001182652.1"/>
</dbReference>
<dbReference type="SMR" id="P28627"/>
<dbReference type="BioGRID" id="35326">
    <property type="interactions" value="83"/>
</dbReference>
<dbReference type="ComplexPortal" id="CPX-1892">
    <property type="entry name" value="Mitochondrial inner membrane peptidase complex"/>
</dbReference>
<dbReference type="DIP" id="DIP-8328N"/>
<dbReference type="FunCoup" id="P28627">
    <property type="interactions" value="454"/>
</dbReference>
<dbReference type="IntAct" id="P28627">
    <property type="interactions" value="2"/>
</dbReference>
<dbReference type="STRING" id="4932.YMR150C"/>
<dbReference type="MEROPS" id="S26.002"/>
<dbReference type="TCDB" id="9.B.391.1.1">
    <property type="family name" value="the eukaryotic inner membrane peptidase complex (impc) family"/>
</dbReference>
<dbReference type="PaxDb" id="4932-YMR150C"/>
<dbReference type="PeptideAtlas" id="P28627"/>
<dbReference type="EnsemblFungi" id="YMR150C_mRNA">
    <property type="protein sequence ID" value="YMR150C"/>
    <property type="gene ID" value="YMR150C"/>
</dbReference>
<dbReference type="GeneID" id="855182"/>
<dbReference type="KEGG" id="sce:YMR150C"/>
<dbReference type="AGR" id="SGD:S000004758"/>
<dbReference type="SGD" id="S000004758">
    <property type="gene designation" value="IMP1"/>
</dbReference>
<dbReference type="VEuPathDB" id="FungiDB:YMR150C"/>
<dbReference type="eggNOG" id="KOG0171">
    <property type="taxonomic scope" value="Eukaryota"/>
</dbReference>
<dbReference type="GeneTree" id="ENSGT00550000075025"/>
<dbReference type="HOGENOM" id="CLU_028723_4_3_1"/>
<dbReference type="InParanoid" id="P28627"/>
<dbReference type="OMA" id="LCKGPSM"/>
<dbReference type="OrthoDB" id="308440at2759"/>
<dbReference type="BioCyc" id="YEAST:G3O-32841-MONOMER"/>
<dbReference type="BioGRID-ORCS" id="855182">
    <property type="hits" value="0 hits in 10 CRISPR screens"/>
</dbReference>
<dbReference type="PRO" id="PR:P28627"/>
<dbReference type="Proteomes" id="UP000002311">
    <property type="component" value="Chromosome XIII"/>
</dbReference>
<dbReference type="RNAct" id="P28627">
    <property type="molecule type" value="protein"/>
</dbReference>
<dbReference type="GO" id="GO:0005743">
    <property type="term" value="C:mitochondrial inner membrane"/>
    <property type="evidence" value="ECO:0000303"/>
    <property type="project" value="ComplexPortal"/>
</dbReference>
<dbReference type="GO" id="GO:0042720">
    <property type="term" value="C:mitochondrial inner membrane peptidase complex"/>
    <property type="evidence" value="ECO:0000353"/>
    <property type="project" value="SGD"/>
</dbReference>
<dbReference type="GO" id="GO:0005739">
    <property type="term" value="C:mitochondrion"/>
    <property type="evidence" value="ECO:0007005"/>
    <property type="project" value="SGD"/>
</dbReference>
<dbReference type="GO" id="GO:0004175">
    <property type="term" value="F:endopeptidase activity"/>
    <property type="evidence" value="ECO:0000314"/>
    <property type="project" value="SGD"/>
</dbReference>
<dbReference type="GO" id="GO:0004252">
    <property type="term" value="F:serine-type endopeptidase activity"/>
    <property type="evidence" value="ECO:0007669"/>
    <property type="project" value="InterPro"/>
</dbReference>
<dbReference type="GO" id="GO:0006627">
    <property type="term" value="P:protein processing involved in protein targeting to mitochondrion"/>
    <property type="evidence" value="ECO:0000314"/>
    <property type="project" value="SGD"/>
</dbReference>
<dbReference type="GO" id="GO:0006465">
    <property type="term" value="P:signal peptide processing"/>
    <property type="evidence" value="ECO:0000303"/>
    <property type="project" value="ComplexPortal"/>
</dbReference>
<dbReference type="CDD" id="cd06530">
    <property type="entry name" value="S26_SPase_I"/>
    <property type="match status" value="1"/>
</dbReference>
<dbReference type="FunFam" id="2.10.109.10:FF:000018">
    <property type="entry name" value="Mitochondrial inner membrane protease subunit"/>
    <property type="match status" value="1"/>
</dbReference>
<dbReference type="Gene3D" id="2.10.109.10">
    <property type="entry name" value="Umud Fragment, subunit A"/>
    <property type="match status" value="1"/>
</dbReference>
<dbReference type="InterPro" id="IPR036286">
    <property type="entry name" value="LexA/Signal_pep-like_sf"/>
</dbReference>
<dbReference type="InterPro" id="IPR052064">
    <property type="entry name" value="Mito_IMP1_subunit"/>
</dbReference>
<dbReference type="InterPro" id="IPR000223">
    <property type="entry name" value="Pept_S26A_signal_pept_1"/>
</dbReference>
<dbReference type="InterPro" id="IPR019757">
    <property type="entry name" value="Pept_S26A_signal_pept_1_Lys-AS"/>
</dbReference>
<dbReference type="InterPro" id="IPR019756">
    <property type="entry name" value="Pept_S26A_signal_pept_1_Ser-AS"/>
</dbReference>
<dbReference type="InterPro" id="IPR019533">
    <property type="entry name" value="Peptidase_S26"/>
</dbReference>
<dbReference type="NCBIfam" id="TIGR02227">
    <property type="entry name" value="sigpep_I_bact"/>
    <property type="match status" value="1"/>
</dbReference>
<dbReference type="PANTHER" id="PTHR12383:SF16">
    <property type="entry name" value="MITOCHONDRIAL INNER MEMBRANE PROTEASE SUBUNIT 1"/>
    <property type="match status" value="1"/>
</dbReference>
<dbReference type="PANTHER" id="PTHR12383">
    <property type="entry name" value="PROTEASE FAMILY S26 MITOCHONDRIAL INNER MEMBRANE PROTEASE-RELATED"/>
    <property type="match status" value="1"/>
</dbReference>
<dbReference type="Pfam" id="PF10502">
    <property type="entry name" value="Peptidase_S26"/>
    <property type="match status" value="1"/>
</dbReference>
<dbReference type="PRINTS" id="PR00727">
    <property type="entry name" value="LEADERPTASE"/>
</dbReference>
<dbReference type="SUPFAM" id="SSF51306">
    <property type="entry name" value="LexA/Signal peptidase"/>
    <property type="match status" value="1"/>
</dbReference>
<dbReference type="PROSITE" id="PS00501">
    <property type="entry name" value="SPASE_I_1"/>
    <property type="match status" value="1"/>
</dbReference>
<dbReference type="PROSITE" id="PS00760">
    <property type="entry name" value="SPASE_I_2"/>
    <property type="match status" value="1"/>
</dbReference>
<keyword id="KW-0903">Direct protein sequencing</keyword>
<keyword id="KW-0378">Hydrolase</keyword>
<keyword id="KW-0472">Membrane</keyword>
<keyword id="KW-0496">Mitochondrion</keyword>
<keyword id="KW-0999">Mitochondrion inner membrane</keyword>
<keyword id="KW-0645">Protease</keyword>
<keyword id="KW-1185">Reference proteome</keyword>
<accession>P28627</accession>
<accession>D6VZX2</accession>
<accession>E9P8W1</accession>
<evidence type="ECO:0000250" key="1"/>
<evidence type="ECO:0000269" key="2">
    <source>
    </source>
</evidence>
<evidence type="ECO:0000269" key="3">
    <source>
    </source>
</evidence>
<evidence type="ECO:0000269" key="4">
    <source>
    </source>
</evidence>
<evidence type="ECO:0000269" key="5">
    <source>
    </source>
</evidence>
<evidence type="ECO:0000305" key="6"/>
<sequence length="190" mass="21433">MTVGTLPIWSKTFSYAIRSLCFLHIIHMYAYEFTETRGESMLPTLSATNDYVHVLKNFQNGRGIKMGDCIVALKPTDPNHRICKRVTGMPGDLVLVDPSTIVNYVGDVLVDEERFGTYIKVPEGHVWVTGDNLSHSLDSRTYNALPMGLIMGKIVAANNFDKPFWDGSIRNIWGFKWINNTFLDVQAKSN</sequence>
<protein>
    <recommendedName>
        <fullName>Mitochondrial inner membrane protease subunit 1</fullName>
        <ecNumber>3.4.21.-</ecNumber>
    </recommendedName>
</protein>
<comment type="function">
    <text evidence="3">Catalytic component of the mitochondrial inner membrane peptidase (IMP) complex. IMP catalyzes the removal of signal peptides required for the targeting of proteins from the mitochondrial matrix, across the inner membrane, into the inter-membrane space. The two catalytic IMP subunits seem to have non-overlapping substrate specificities. IMP1 substrates include nuclear encoded CYB2, mitochondrially encoded COX2, NADH-cytochrome b5 reductase and GUT2.</text>
</comment>
<comment type="subunit">
    <text evidence="5">Component of the mitochondrial inner membrane peptidase (IMP) complex which at least consists of IMP1, IMP2 and SOM1.</text>
</comment>
<comment type="subcellular location">
    <subcellularLocation>
        <location evidence="6">Mitochondrion inner membrane</location>
    </subcellularLocation>
</comment>
<comment type="similarity">
    <text evidence="6">Belongs to the peptidase S26 family. IMP1 subfamily.</text>
</comment>